<protein>
    <recommendedName>
        <fullName evidence="1">5'-nucleotidase SurE</fullName>
        <ecNumber evidence="1">3.1.3.5</ecNumber>
    </recommendedName>
    <alternativeName>
        <fullName evidence="1">Nucleoside 5'-monophosphate phosphohydrolase</fullName>
    </alternativeName>
</protein>
<sequence>MTTEKPLNLLISNDDGIFALGVRTLANTLAKAGHQVTVVCPDRERSATGHGLTLHQPIRAQIVEGIFDPQVTAWSCSGTPSDCIKFALSAVLFTRPDFVLSGINHGSNLGTDILYSGTVSAAMEGLIDGITSIALSLTSFSSQDFQPAANFAVDLIAKLARHPLPQPTLLNVNVPPVKSEDMAGVKLTRQGLRRYRENFEKRLDPRGKSYYWLVGEVIEEIEQPDHLHLPGHIPTDVQAIGDNYITITPLQYNLTDVQGFSDLNQTQWFDP</sequence>
<comment type="function">
    <text evidence="1">Nucleotidase that shows phosphatase activity on nucleoside 5'-monophosphates.</text>
</comment>
<comment type="catalytic activity">
    <reaction evidence="1">
        <text>a ribonucleoside 5'-phosphate + H2O = a ribonucleoside + phosphate</text>
        <dbReference type="Rhea" id="RHEA:12484"/>
        <dbReference type="ChEBI" id="CHEBI:15377"/>
        <dbReference type="ChEBI" id="CHEBI:18254"/>
        <dbReference type="ChEBI" id="CHEBI:43474"/>
        <dbReference type="ChEBI" id="CHEBI:58043"/>
        <dbReference type="EC" id="3.1.3.5"/>
    </reaction>
</comment>
<comment type="cofactor">
    <cofactor evidence="1">
        <name>a divalent metal cation</name>
        <dbReference type="ChEBI" id="CHEBI:60240"/>
    </cofactor>
    <text evidence="1">Binds 1 divalent metal cation per subunit.</text>
</comment>
<comment type="subcellular location">
    <subcellularLocation>
        <location evidence="1">Cytoplasm</location>
    </subcellularLocation>
</comment>
<comment type="similarity">
    <text evidence="1">Belongs to the SurE nucleotidase family.</text>
</comment>
<reference key="1">
    <citation type="journal article" date="2011" name="MBio">
        <title>Novel metabolic attributes of the genus Cyanothece, comprising a group of unicellular nitrogen-fixing Cyanobacteria.</title>
        <authorList>
            <person name="Bandyopadhyay A."/>
            <person name="Elvitigala T."/>
            <person name="Welsh E."/>
            <person name="Stockel J."/>
            <person name="Liberton M."/>
            <person name="Min H."/>
            <person name="Sherman L.A."/>
            <person name="Pakrasi H.B."/>
        </authorList>
    </citation>
    <scope>NUCLEOTIDE SEQUENCE [LARGE SCALE GENOMIC DNA]</scope>
    <source>
        <strain>PCC 7424</strain>
    </source>
</reference>
<keyword id="KW-0963">Cytoplasm</keyword>
<keyword id="KW-0378">Hydrolase</keyword>
<keyword id="KW-0479">Metal-binding</keyword>
<keyword id="KW-0547">Nucleotide-binding</keyword>
<keyword id="KW-1185">Reference proteome</keyword>
<name>SURE_GLOC7</name>
<evidence type="ECO:0000255" key="1">
    <source>
        <dbReference type="HAMAP-Rule" id="MF_00060"/>
    </source>
</evidence>
<dbReference type="EC" id="3.1.3.5" evidence="1"/>
<dbReference type="EMBL" id="CP001291">
    <property type="protein sequence ID" value="ACK71430.1"/>
    <property type="molecule type" value="Genomic_DNA"/>
</dbReference>
<dbReference type="RefSeq" id="WP_015955027.1">
    <property type="nucleotide sequence ID" value="NC_011729.1"/>
</dbReference>
<dbReference type="SMR" id="B7KB74"/>
<dbReference type="STRING" id="65393.PCC7424_3028"/>
<dbReference type="KEGG" id="cyc:PCC7424_3028"/>
<dbReference type="eggNOG" id="COG0496">
    <property type="taxonomic scope" value="Bacteria"/>
</dbReference>
<dbReference type="HOGENOM" id="CLU_045192_1_3_3"/>
<dbReference type="OrthoDB" id="9780815at2"/>
<dbReference type="Proteomes" id="UP000002384">
    <property type="component" value="Chromosome"/>
</dbReference>
<dbReference type="GO" id="GO:0005737">
    <property type="term" value="C:cytoplasm"/>
    <property type="evidence" value="ECO:0007669"/>
    <property type="project" value="UniProtKB-SubCell"/>
</dbReference>
<dbReference type="GO" id="GO:0008254">
    <property type="term" value="F:3'-nucleotidase activity"/>
    <property type="evidence" value="ECO:0007669"/>
    <property type="project" value="TreeGrafter"/>
</dbReference>
<dbReference type="GO" id="GO:0008253">
    <property type="term" value="F:5'-nucleotidase activity"/>
    <property type="evidence" value="ECO:0007669"/>
    <property type="project" value="UniProtKB-UniRule"/>
</dbReference>
<dbReference type="GO" id="GO:0004309">
    <property type="term" value="F:exopolyphosphatase activity"/>
    <property type="evidence" value="ECO:0007669"/>
    <property type="project" value="TreeGrafter"/>
</dbReference>
<dbReference type="GO" id="GO:0046872">
    <property type="term" value="F:metal ion binding"/>
    <property type="evidence" value="ECO:0007669"/>
    <property type="project" value="UniProtKB-UniRule"/>
</dbReference>
<dbReference type="GO" id="GO:0000166">
    <property type="term" value="F:nucleotide binding"/>
    <property type="evidence" value="ECO:0007669"/>
    <property type="project" value="UniProtKB-KW"/>
</dbReference>
<dbReference type="FunFam" id="3.40.1210.10:FF:000001">
    <property type="entry name" value="5'/3'-nucleotidase SurE"/>
    <property type="match status" value="1"/>
</dbReference>
<dbReference type="Gene3D" id="3.40.1210.10">
    <property type="entry name" value="Survival protein SurE-like phosphatase/nucleotidase"/>
    <property type="match status" value="1"/>
</dbReference>
<dbReference type="HAMAP" id="MF_00060">
    <property type="entry name" value="SurE"/>
    <property type="match status" value="1"/>
</dbReference>
<dbReference type="InterPro" id="IPR030048">
    <property type="entry name" value="SurE"/>
</dbReference>
<dbReference type="InterPro" id="IPR002828">
    <property type="entry name" value="SurE-like_Pase/nucleotidase"/>
</dbReference>
<dbReference type="InterPro" id="IPR036523">
    <property type="entry name" value="SurE-like_sf"/>
</dbReference>
<dbReference type="NCBIfam" id="NF001490">
    <property type="entry name" value="PRK00346.1-4"/>
    <property type="match status" value="1"/>
</dbReference>
<dbReference type="NCBIfam" id="NF001492">
    <property type="entry name" value="PRK00346.2-2"/>
    <property type="match status" value="1"/>
</dbReference>
<dbReference type="NCBIfam" id="TIGR00087">
    <property type="entry name" value="surE"/>
    <property type="match status" value="1"/>
</dbReference>
<dbReference type="PANTHER" id="PTHR30457">
    <property type="entry name" value="5'-NUCLEOTIDASE SURE"/>
    <property type="match status" value="1"/>
</dbReference>
<dbReference type="PANTHER" id="PTHR30457:SF12">
    <property type="entry name" value="5'_3'-NUCLEOTIDASE SURE"/>
    <property type="match status" value="1"/>
</dbReference>
<dbReference type="Pfam" id="PF01975">
    <property type="entry name" value="SurE"/>
    <property type="match status" value="1"/>
</dbReference>
<dbReference type="SUPFAM" id="SSF64167">
    <property type="entry name" value="SurE-like"/>
    <property type="match status" value="1"/>
</dbReference>
<accession>B7KB74</accession>
<organism>
    <name type="scientific">Gloeothece citriformis (strain PCC 7424)</name>
    <name type="common">Cyanothece sp. (strain PCC 7424)</name>
    <dbReference type="NCBI Taxonomy" id="65393"/>
    <lineage>
        <taxon>Bacteria</taxon>
        <taxon>Bacillati</taxon>
        <taxon>Cyanobacteriota</taxon>
        <taxon>Cyanophyceae</taxon>
        <taxon>Oscillatoriophycideae</taxon>
        <taxon>Chroococcales</taxon>
        <taxon>Aphanothecaceae</taxon>
        <taxon>Gloeothece</taxon>
        <taxon>Gloeothece citriformis</taxon>
    </lineage>
</organism>
<gene>
    <name evidence="1" type="primary">surE</name>
    <name type="ordered locus">PCC7424_3028</name>
</gene>
<proteinExistence type="inferred from homology"/>
<feature type="chain" id="PRO_1000196590" description="5'-nucleotidase SurE">
    <location>
        <begin position="1"/>
        <end position="271"/>
    </location>
</feature>
<feature type="binding site" evidence="1">
    <location>
        <position position="14"/>
    </location>
    <ligand>
        <name>a divalent metal cation</name>
        <dbReference type="ChEBI" id="CHEBI:60240"/>
    </ligand>
</feature>
<feature type="binding site" evidence="1">
    <location>
        <position position="15"/>
    </location>
    <ligand>
        <name>a divalent metal cation</name>
        <dbReference type="ChEBI" id="CHEBI:60240"/>
    </ligand>
</feature>
<feature type="binding site" evidence="1">
    <location>
        <position position="46"/>
    </location>
    <ligand>
        <name>a divalent metal cation</name>
        <dbReference type="ChEBI" id="CHEBI:60240"/>
    </ligand>
</feature>
<feature type="binding site" evidence="1">
    <location>
        <position position="104"/>
    </location>
    <ligand>
        <name>a divalent metal cation</name>
        <dbReference type="ChEBI" id="CHEBI:60240"/>
    </ligand>
</feature>